<keyword id="KW-0489">Methyltransferase</keyword>
<keyword id="KW-0511">Multifunctional enzyme</keyword>
<keyword id="KW-0596">Phosphopantetheine</keyword>
<keyword id="KW-0597">Phosphoprotein</keyword>
<keyword id="KW-1185">Reference proteome</keyword>
<keyword id="KW-0808">Transferase</keyword>
<sequence>MTPEPIAIIGTGCKFPGSASSPSRLWDLLRNPKTVASEPPSTRFDNRSFYDPDPSHPGTTNTKESYFLSEDIRLFDSAFFNISASEAEGIDPQQRLLLETVYESLEIAGQRLEALQGSSTGIFCGVMGNDWEHRVGFDDKAIPRYAATGLARNNIANRVSYFFDWHGPSLVVDTACSSSLVALHQAVTALRQGECSVAVAAGTNLLLHPNIYISTSNLQMLSPNGRGRMWDAKADGYARGEGIGALVLKCLSDAIADGDPIECVIRATGVNQDGRTMGLTMPSSKAQLALIESTYAQAGLDPKTRPEDRCQYFEAHGTGTLAGDPQEASAIYKSFFGDSSQHVSDNDPLYVGSIKTVVGHTEGTAGIAGVIKASLSIQHGTIFPNLLFDELNPELQRFTPRLKVPTETMPWPTLAPNIPRRVSVNSFGFGGTNAHAILESYDIECDENWNGIPPQISNPIVLPFLFSAASARSLGTMLSNYEEYLRSNPKIHLMDLAWTLMKRRSMLAYRVVLCAPTIEVLIIKIREELELRKINNPSTITAQPPSGQKRILGIFTGQGAQWPQMGLDLVTHTSEGRQLFEEMHQSLLSLPIELQPTFSLFDELAAAQPMSRLHEAVLSQPLCAALQIILVNFLTAVGISFETVVGHSSGEIAAAYSAGILSASDCIRVAYLRGRVAGLAGAPNGQPGAMLAVGLSFATANLLCLEPGLQGRVHVAASNSPSSVTLSGDQDAIHEVEQRLQVEGKFARMLRVDTAYHSHHMQPCAKPYLLDMDAAQVKLGLQMNTRWYSSVHDAQEINLDEHGQSLTGEYWKNNMVSPVLFSAALLAALTSDGGPPDVIVEIGPHPALKGPAQQTISDALPSAGGSEIPYIGLSNRGASGIESLANAIGLLCAHLGPNSIDLARYFSLFDHKYTPKVVRGLPAYPFDHRQRHWFETRKLKNHLHNGGLLHPLLGSLEADTADGEWRWRHYLRREELEWLDGHQIQSRTVFPATGYIAMALEAAGIFAAGQSMRLVQIQRLSIDQAITFSDESSTGIETLFRLSGLQSQGDQVTGTFNCHANIGGRLVNCASGKLLICWGNPETSMLPSQTPPAADAGAVDIKDFYQSLAKLGYNYTGAFQGITSLARQKDMSTGQIINMGQLSHESSLLFHPVMMDTSLQMLLGALGAPGDGSLYTLMVPTGIERVTINPAFCGPKGAKAAGRTLFADAFITQLDTDGCSGAVEVFTQEGNGMVQMEGVHISPLGPPDRQRQPFSEIAWGPLTPDAGLHSYPYPADLMNHTLLMEQISLINIKQVVDQLTDKDRSGLDWHRSRVVAWMEHVLAMTRTGKHPTCRSEWLDGTQEDIEVLLERLAPSVTGLLAGVVGANMLRFLRGETSMLEEARKDDVLSRFYKEDPESKTMNDRLGDLVGQIAFRYPRMKILEIGAGSGSATKSILERIGSSYHSYTFTDISPGFFEEAKQQFAEHQDHFIYQVLNVEKDPSKQGFEDDSYDLVIAANVLHATKSMKDTMTNVRRLLKPGGYLGLMEVTNTSTIGISFCVGGFEGWWAGEGDGRVWGPMLNASNWENVLQDTGFGGIDTITTLGDARLSAYSVLVSQAVDDRMKVLRQPLSPAHQLKDTAGELVIVGGEKDQTVSLVEEVAHLLEPFFARIVPVQTLELLKGVNISPYATVLSLVDMDGPCFEYLSQSRLQGLQALTVAARKMLWVTTGRECDSPHLGMSKGWLKCLSYEHPEAQYQYLNITDDSTEESTLIAATLMRLVRTDEGNDYSLSSRTSATEPELRFQNGTMSIPRLRASPELNDRYVAGQQLVHKPVNLLESTVRMLPSAKGHYALHLEDKSLVSSHRADIDTELVRIRTRYSTIQAVRVGKDDVFLHLVLGEQEHSHRRLLAYSKDHASIITTPMSWCCDLPDAVRPEFENSFLQATLAAVLARVLVQQATPGSVLWAHEASGVLQQAIRIHAVASGVRPHFTTSSQSLPMEGVSFIHPLVTSRKLVGYLPQDVSVAACFEVEEQGDEGIFSRIKSLLPQCVTVEDTHSLWRTSQQLPEHGNVHHRHLGESLNVASAMAIQFVTSDPTQPVDVKGLSALPPTPRTPKADCIVKWTGSQNEALNVQVKTASQTLTLSSQKTYLLVGMTGDLGRSICHWLITKGARHVVLTSRSPKVDPHWIQEMSKLGANVVPMQLDVSNRESLLHVCDKIQKYHPRIGGVVNGALVLNDCAFDEMPLETMQATFAAKVDGSILLDELFRGDLDFFILMGSLTGIVGNWNQSAYSAATGFQSNLIHQRRARNIVGSIIQPGIITSVGYISRKGSGLAQHVSNTVGSLLLSERDLHEVFAEAILAGHPETSRNPEIVAGMPMANPVTQPDIIWYRNPLCWDFVDYRIQSSSANHAGDGNTCSMKARLESAASMSEAAEIVAAGLADKVRSKFNLASDIALTQDTQLSDLGIDSLVAVDLRSWFVRELSVEIPMLQILSGSSLRALTADSVSKLPPTLLPGILSRDQDFKDVSGLTSPPEVPSDASRSSVSSGMDEIVTPESPSFDQVYRIAGDEMELTKPHQRPIPTPQL</sequence>
<dbReference type="EC" id="2.3.1.-" evidence="10"/>
<dbReference type="EMBL" id="MDYM01000002">
    <property type="protein sequence ID" value="OQD69647.1"/>
    <property type="molecule type" value="Genomic_DNA"/>
</dbReference>
<dbReference type="SMR" id="A0A1V6NYI6"/>
<dbReference type="STRING" id="60169.A0A1V6NYI6"/>
<dbReference type="OrthoDB" id="89094at5073"/>
<dbReference type="UniPathway" id="UPA00213"/>
<dbReference type="Proteomes" id="UP000191408">
    <property type="component" value="Unassembled WGS sequence"/>
</dbReference>
<dbReference type="GO" id="GO:0004315">
    <property type="term" value="F:3-oxoacyl-[acyl-carrier-protein] synthase activity"/>
    <property type="evidence" value="ECO:0007669"/>
    <property type="project" value="InterPro"/>
</dbReference>
<dbReference type="GO" id="GO:0004312">
    <property type="term" value="F:fatty acid synthase activity"/>
    <property type="evidence" value="ECO:0007669"/>
    <property type="project" value="TreeGrafter"/>
</dbReference>
<dbReference type="GO" id="GO:0008168">
    <property type="term" value="F:methyltransferase activity"/>
    <property type="evidence" value="ECO:0007669"/>
    <property type="project" value="UniProtKB-KW"/>
</dbReference>
<dbReference type="GO" id="GO:0031177">
    <property type="term" value="F:phosphopantetheine binding"/>
    <property type="evidence" value="ECO:0007669"/>
    <property type="project" value="InterPro"/>
</dbReference>
<dbReference type="GO" id="GO:0006633">
    <property type="term" value="P:fatty acid biosynthetic process"/>
    <property type="evidence" value="ECO:0007669"/>
    <property type="project" value="InterPro"/>
</dbReference>
<dbReference type="GO" id="GO:1901336">
    <property type="term" value="P:lactone biosynthetic process"/>
    <property type="evidence" value="ECO:0007669"/>
    <property type="project" value="UniProtKB-ARBA"/>
</dbReference>
<dbReference type="GO" id="GO:0032259">
    <property type="term" value="P:methylation"/>
    <property type="evidence" value="ECO:0007669"/>
    <property type="project" value="UniProtKB-KW"/>
</dbReference>
<dbReference type="GO" id="GO:0030639">
    <property type="term" value="P:polyketide biosynthetic process"/>
    <property type="evidence" value="ECO:0007669"/>
    <property type="project" value="UniProtKB-ARBA"/>
</dbReference>
<dbReference type="GO" id="GO:0016114">
    <property type="term" value="P:terpenoid biosynthetic process"/>
    <property type="evidence" value="ECO:0007669"/>
    <property type="project" value="UniProtKB-UniPathway"/>
</dbReference>
<dbReference type="CDD" id="cd02440">
    <property type="entry name" value="AdoMet_MTases"/>
    <property type="match status" value="1"/>
</dbReference>
<dbReference type="CDD" id="cd00833">
    <property type="entry name" value="PKS"/>
    <property type="match status" value="1"/>
</dbReference>
<dbReference type="FunFam" id="3.40.47.10:FF:000019">
    <property type="entry name" value="Polyketide synthase type I"/>
    <property type="match status" value="1"/>
</dbReference>
<dbReference type="Gene3D" id="3.40.47.10">
    <property type="match status" value="1"/>
</dbReference>
<dbReference type="Gene3D" id="1.10.1200.10">
    <property type="entry name" value="ACP-like"/>
    <property type="match status" value="1"/>
</dbReference>
<dbReference type="Gene3D" id="3.40.366.10">
    <property type="entry name" value="Malonyl-Coenzyme A Acyl Carrier Protein, domain 2"/>
    <property type="match status" value="1"/>
</dbReference>
<dbReference type="Gene3D" id="3.40.50.720">
    <property type="entry name" value="NAD(P)-binding Rossmann-like Domain"/>
    <property type="match status" value="2"/>
</dbReference>
<dbReference type="Gene3D" id="3.10.129.110">
    <property type="entry name" value="Polyketide synthase dehydratase"/>
    <property type="match status" value="1"/>
</dbReference>
<dbReference type="Gene3D" id="3.40.50.150">
    <property type="entry name" value="Vaccinia Virus protein VP39"/>
    <property type="match status" value="1"/>
</dbReference>
<dbReference type="InterPro" id="IPR001227">
    <property type="entry name" value="Ac_transferase_dom_sf"/>
</dbReference>
<dbReference type="InterPro" id="IPR036736">
    <property type="entry name" value="ACP-like_sf"/>
</dbReference>
<dbReference type="InterPro" id="IPR014043">
    <property type="entry name" value="Acyl_transferase_dom"/>
</dbReference>
<dbReference type="InterPro" id="IPR016035">
    <property type="entry name" value="Acyl_Trfase/lysoPLipase"/>
</dbReference>
<dbReference type="InterPro" id="IPR018201">
    <property type="entry name" value="Ketoacyl_synth_AS"/>
</dbReference>
<dbReference type="InterPro" id="IPR014031">
    <property type="entry name" value="Ketoacyl_synth_C"/>
</dbReference>
<dbReference type="InterPro" id="IPR014030">
    <property type="entry name" value="Ketoacyl_synth_N"/>
</dbReference>
<dbReference type="InterPro" id="IPR016036">
    <property type="entry name" value="Malonyl_transacylase_ACP-bd"/>
</dbReference>
<dbReference type="InterPro" id="IPR013217">
    <property type="entry name" value="Methyltransf_12"/>
</dbReference>
<dbReference type="InterPro" id="IPR036291">
    <property type="entry name" value="NAD(P)-bd_dom_sf"/>
</dbReference>
<dbReference type="InterPro" id="IPR032821">
    <property type="entry name" value="PKS_assoc"/>
</dbReference>
<dbReference type="InterPro" id="IPR020841">
    <property type="entry name" value="PKS_Beta-ketoAc_synthase_dom"/>
</dbReference>
<dbReference type="InterPro" id="IPR042104">
    <property type="entry name" value="PKS_dehydratase_sf"/>
</dbReference>
<dbReference type="InterPro" id="IPR020807">
    <property type="entry name" value="PKS_DH"/>
</dbReference>
<dbReference type="InterPro" id="IPR049551">
    <property type="entry name" value="PKS_DH_C"/>
</dbReference>
<dbReference type="InterPro" id="IPR049552">
    <property type="entry name" value="PKS_DH_N"/>
</dbReference>
<dbReference type="InterPro" id="IPR013968">
    <property type="entry name" value="PKS_KR"/>
</dbReference>
<dbReference type="InterPro" id="IPR049900">
    <property type="entry name" value="PKS_mFAS_DH"/>
</dbReference>
<dbReference type="InterPro" id="IPR050091">
    <property type="entry name" value="PKS_NRPS_Biosynth_Enz"/>
</dbReference>
<dbReference type="InterPro" id="IPR020806">
    <property type="entry name" value="PKS_PP-bd"/>
</dbReference>
<dbReference type="InterPro" id="IPR009081">
    <property type="entry name" value="PP-bd_ACP"/>
</dbReference>
<dbReference type="InterPro" id="IPR006162">
    <property type="entry name" value="Ppantetheine_attach_site"/>
</dbReference>
<dbReference type="InterPro" id="IPR029063">
    <property type="entry name" value="SAM-dependent_MTases_sf"/>
</dbReference>
<dbReference type="InterPro" id="IPR016039">
    <property type="entry name" value="Thiolase-like"/>
</dbReference>
<dbReference type="PANTHER" id="PTHR43775">
    <property type="entry name" value="FATTY ACID SYNTHASE"/>
    <property type="match status" value="1"/>
</dbReference>
<dbReference type="PANTHER" id="PTHR43775:SF48">
    <property type="entry name" value="HIGHLY REDUCING POLYKETIDE SYNTHASE SDGA"/>
    <property type="match status" value="1"/>
</dbReference>
<dbReference type="Pfam" id="PF00698">
    <property type="entry name" value="Acyl_transf_1"/>
    <property type="match status" value="1"/>
</dbReference>
<dbReference type="Pfam" id="PF16197">
    <property type="entry name" value="KAsynt_C_assoc"/>
    <property type="match status" value="1"/>
</dbReference>
<dbReference type="Pfam" id="PF00109">
    <property type="entry name" value="ketoacyl-synt"/>
    <property type="match status" value="1"/>
</dbReference>
<dbReference type="Pfam" id="PF02801">
    <property type="entry name" value="Ketoacyl-synt_C"/>
    <property type="match status" value="1"/>
</dbReference>
<dbReference type="Pfam" id="PF08659">
    <property type="entry name" value="KR"/>
    <property type="match status" value="1"/>
</dbReference>
<dbReference type="Pfam" id="PF08242">
    <property type="entry name" value="Methyltransf_12"/>
    <property type="match status" value="1"/>
</dbReference>
<dbReference type="Pfam" id="PF21089">
    <property type="entry name" value="PKS_DH_N"/>
    <property type="match status" value="1"/>
</dbReference>
<dbReference type="Pfam" id="PF00550">
    <property type="entry name" value="PP-binding"/>
    <property type="match status" value="1"/>
</dbReference>
<dbReference type="Pfam" id="PF14765">
    <property type="entry name" value="PS-DH"/>
    <property type="match status" value="1"/>
</dbReference>
<dbReference type="SMART" id="SM00827">
    <property type="entry name" value="PKS_AT"/>
    <property type="match status" value="1"/>
</dbReference>
<dbReference type="SMART" id="SM00826">
    <property type="entry name" value="PKS_DH"/>
    <property type="match status" value="1"/>
</dbReference>
<dbReference type="SMART" id="SM00822">
    <property type="entry name" value="PKS_KR"/>
    <property type="match status" value="1"/>
</dbReference>
<dbReference type="SMART" id="SM00825">
    <property type="entry name" value="PKS_KS"/>
    <property type="match status" value="1"/>
</dbReference>
<dbReference type="SMART" id="SM00823">
    <property type="entry name" value="PKS_PP"/>
    <property type="match status" value="1"/>
</dbReference>
<dbReference type="SUPFAM" id="SSF47336">
    <property type="entry name" value="ACP-like"/>
    <property type="match status" value="1"/>
</dbReference>
<dbReference type="SUPFAM" id="SSF52151">
    <property type="entry name" value="FabD/lysophospholipase-like"/>
    <property type="match status" value="1"/>
</dbReference>
<dbReference type="SUPFAM" id="SSF51735">
    <property type="entry name" value="NAD(P)-binding Rossmann-fold domains"/>
    <property type="match status" value="1"/>
</dbReference>
<dbReference type="SUPFAM" id="SSF55048">
    <property type="entry name" value="Probable ACP-binding domain of malonyl-CoA ACP transacylase"/>
    <property type="match status" value="1"/>
</dbReference>
<dbReference type="SUPFAM" id="SSF53335">
    <property type="entry name" value="S-adenosyl-L-methionine-dependent methyltransferases"/>
    <property type="match status" value="1"/>
</dbReference>
<dbReference type="SUPFAM" id="SSF53901">
    <property type="entry name" value="Thiolase-like"/>
    <property type="match status" value="1"/>
</dbReference>
<dbReference type="PROSITE" id="PS50075">
    <property type="entry name" value="CARRIER"/>
    <property type="match status" value="1"/>
</dbReference>
<dbReference type="PROSITE" id="PS00606">
    <property type="entry name" value="KS3_1"/>
    <property type="match status" value="1"/>
</dbReference>
<dbReference type="PROSITE" id="PS52004">
    <property type="entry name" value="KS3_2"/>
    <property type="match status" value="1"/>
</dbReference>
<dbReference type="PROSITE" id="PS00012">
    <property type="entry name" value="PHOSPHOPANTETHEINE"/>
    <property type="match status" value="1"/>
</dbReference>
<dbReference type="PROSITE" id="PS52019">
    <property type="entry name" value="PKS_MFAS_DH"/>
    <property type="match status" value="1"/>
</dbReference>
<proteinExistence type="inferred from homology"/>
<name>VERA_PENPO</name>
<feature type="chain" id="PRO_0000455371" description="Highly reducing polyketide synthase verA">
    <location>
        <begin position="1"/>
        <end position="2566"/>
    </location>
</feature>
<feature type="domain" description="Ketosynthase family 3 (KS3)" evidence="4">
    <location>
        <begin position="3"/>
        <end position="440"/>
    </location>
</feature>
<feature type="domain" description="PKS/mFAS DH" evidence="5">
    <location>
        <begin position="950"/>
        <end position="1250"/>
    </location>
</feature>
<feature type="domain" description="Carrier" evidence="3">
    <location>
        <begin position="2411"/>
        <end position="2489"/>
    </location>
</feature>
<feature type="region of interest" description="Disordered" evidence="7">
    <location>
        <begin position="35"/>
        <end position="61"/>
    </location>
</feature>
<feature type="region of interest" description="Malonyl-CoA:ACP transacylase (MAT) domain" evidence="2">
    <location>
        <begin position="554"/>
        <end position="880"/>
    </location>
</feature>
<feature type="region of interest" description="Dehydratase (DH) domain" evidence="2">
    <location>
        <begin position="950"/>
        <end position="1246"/>
    </location>
</feature>
<feature type="region of interest" description="N-terminal hotdog fold" evidence="5">
    <location>
        <begin position="950"/>
        <end position="1081"/>
    </location>
</feature>
<feature type="region of interest" description="C-terminal hotdog fold" evidence="5">
    <location>
        <begin position="1096"/>
        <end position="1250"/>
    </location>
</feature>
<feature type="region of interest" description="Methyltransferase (CMet) domain" evidence="2">
    <location>
        <begin position="1386"/>
        <end position="1581"/>
    </location>
</feature>
<feature type="region of interest" description="Ketoreductase (KR) domain" evidence="2">
    <location>
        <begin position="2127"/>
        <end position="2294"/>
    </location>
</feature>
<feature type="region of interest" description="Disordered" evidence="7">
    <location>
        <begin position="2505"/>
        <end position="2540"/>
    </location>
</feature>
<feature type="compositionally biased region" description="Basic and acidic residues" evidence="7">
    <location>
        <begin position="44"/>
        <end position="54"/>
    </location>
</feature>
<feature type="compositionally biased region" description="Low complexity" evidence="7">
    <location>
        <begin position="2518"/>
        <end position="2527"/>
    </location>
</feature>
<feature type="active site" description="For beta-ketoacyl synthase activity" evidence="4">
    <location>
        <position position="176"/>
    </location>
</feature>
<feature type="active site" description="For beta-ketoacyl synthase activity" evidence="4">
    <location>
        <position position="316"/>
    </location>
</feature>
<feature type="active site" description="For beta-ketoacyl synthase activity" evidence="4">
    <location>
        <position position="360"/>
    </location>
</feature>
<feature type="active site" description="For malonyltransferase activity" evidence="6">
    <location>
        <position position="648"/>
    </location>
</feature>
<feature type="active site" description="Proton acceptor; for dehydratase activity" evidence="5">
    <location>
        <position position="982"/>
    </location>
</feature>
<feature type="active site" description="Proton donor; for dehydratase activity" evidence="5">
    <location>
        <position position="1156"/>
    </location>
</feature>
<feature type="modified residue" description="O-(pantetheine 4'-phosphoryl)serine" evidence="3">
    <location>
        <position position="2449"/>
    </location>
</feature>
<protein>
    <recommendedName>
        <fullName evidence="9">Highly reducing polyketide synthase verA</fullName>
        <shortName evidence="9">HR-PKS verA</shortName>
        <ecNumber evidence="10">2.3.1.-</ecNumber>
    </recommendedName>
    <alternativeName>
        <fullName evidence="9">Cluster 4 protein A</fullName>
    </alternativeName>
    <alternativeName>
        <fullName evidence="9">Verrucosidin biosynthesis cluster protein A</fullName>
    </alternativeName>
</protein>
<evidence type="ECO:0000250" key="1">
    <source>
        <dbReference type="UniProtKB" id="Q9Y8A5"/>
    </source>
</evidence>
<evidence type="ECO:0000255" key="2"/>
<evidence type="ECO:0000255" key="3">
    <source>
        <dbReference type="PROSITE-ProRule" id="PRU00258"/>
    </source>
</evidence>
<evidence type="ECO:0000255" key="4">
    <source>
        <dbReference type="PROSITE-ProRule" id="PRU01348"/>
    </source>
</evidence>
<evidence type="ECO:0000255" key="5">
    <source>
        <dbReference type="PROSITE-ProRule" id="PRU01363"/>
    </source>
</evidence>
<evidence type="ECO:0000255" key="6">
    <source>
        <dbReference type="PROSITE-ProRule" id="PRU10022"/>
    </source>
</evidence>
<evidence type="ECO:0000256" key="7">
    <source>
        <dbReference type="SAM" id="MobiDB-lite"/>
    </source>
</evidence>
<evidence type="ECO:0000269" key="8">
    <source>
    </source>
</evidence>
<evidence type="ECO:0000303" key="9">
    <source>
    </source>
</evidence>
<evidence type="ECO:0000305" key="10">
    <source>
    </source>
</evidence>
<accession>A0A1V6NYI6</accession>
<comment type="function">
    <text evidence="8 10">Highly reducing polyketide synthase (HR-PKS); part of the gene cluster that mediates the biosynthesis of the neurotoxin verrucosidin, a methylated alpha-pyrone polyketide that inhibits oxidative phosphorylation in mitochondria and thereby causes neurological diseases (PubMed:34093475). The carbon backbone of verrucosidin is synthesized by the HR-PKS verA, and further modified by the other verrucodidin cluster enzymes (Probable).</text>
</comment>
<comment type="cofactor">
    <cofactor evidence="1">
        <name>pantetheine 4'-phosphate</name>
        <dbReference type="ChEBI" id="CHEBI:47942"/>
    </cofactor>
    <text evidence="1">Binds 1 phosphopantetheine covalently.</text>
</comment>
<comment type="pathway">
    <text evidence="8">Secondary metabolite biosynthesis; terpenoid biosynthesis.</text>
</comment>
<comment type="pathway">
    <text evidence="8">Mycotoxin biosynthesis.</text>
</comment>
<comment type="domain">
    <text evidence="10">Multidomain protein; including a ketosynthase (KS) that catalyzes repeated decarboxylative condensation to elongate the polyketide backbone; a malonyl-CoA:ACP transacylase (MAT) that selects and transfers the extender unit malonyl-CoA; a dehydratase (DH) domain that reduces hydroxyl groups to enoyl groups; a methyltransferase (CMeT) domain responsible for the incorporation of methyl groups; a ketoreductase (KR) domain that catalyzes beta-ketoreduction steps; and an acyl-carrier protein (ACP) that serves as the tether of the growing and completed polyketide via its phosphopantetheinyl arm.</text>
</comment>
<comment type="disruption phenotype">
    <text evidence="8">Does not affect the ability to grow nor conidiation (PubMed:34093475). Abolishes the production of verrucosidin (PubMed:34093475). Slightly reduced virulence 7 days after the inoculation on apples cultivar Ambrosia (PubMed:34093475).</text>
</comment>
<reference key="1">
    <citation type="journal article" date="2017" name="Nat. Microbiol.">
        <title>Global analysis of biosynthetic gene clusters reveals vast potential of secondary metabolite production in Penicillium species.</title>
        <authorList>
            <person name="Nielsen J.C."/>
            <person name="Grijseels S."/>
            <person name="Prigent S."/>
            <person name="Ji B."/>
            <person name="Dainat J."/>
            <person name="Nielsen K.F."/>
            <person name="Frisvad J.C."/>
            <person name="Workman M."/>
            <person name="Nielsen J."/>
        </authorList>
    </citation>
    <scope>NUCLEOTIDE SEQUENCE [LARGE SCALE GENOMIC DNA]</scope>
    <source>
        <strain>IBT 4502</strain>
    </source>
</reference>
<reference key="2">
    <citation type="journal article" date="2021" name="Front. Microbiol.">
        <title>CRISPR-Cas9-Based Discovery of the Verrucosidin Biosynthesis Gene Cluster in Penicillium polonicum.</title>
        <authorList>
            <person name="Valente S."/>
            <person name="Piombo E."/>
            <person name="Schroeckh V."/>
            <person name="Meloni G.R."/>
            <person name="Heinekamp T."/>
            <person name="Brakhage A.A."/>
            <person name="Spadaro D."/>
        </authorList>
    </citation>
    <scope>FUNCTION</scope>
    <scope>DISRUPTION PHENOTYPE</scope>
    <scope>PATHWAY</scope>
</reference>
<gene>
    <name evidence="9" type="primary">verA</name>
    <name evidence="9" type="synonym">cl4A</name>
    <name type="ORF">PENPOL_c002G03804</name>
</gene>
<organism>
    <name type="scientific">Penicillium polonicum</name>
    <dbReference type="NCBI Taxonomy" id="60169"/>
    <lineage>
        <taxon>Eukaryota</taxon>
        <taxon>Fungi</taxon>
        <taxon>Dikarya</taxon>
        <taxon>Ascomycota</taxon>
        <taxon>Pezizomycotina</taxon>
        <taxon>Eurotiomycetes</taxon>
        <taxon>Eurotiomycetidae</taxon>
        <taxon>Eurotiales</taxon>
        <taxon>Aspergillaceae</taxon>
        <taxon>Penicillium</taxon>
    </lineage>
</organism>